<sequence>MAAGGSTQQRRREMAAASAAAISGAGRCRLSKIGATRRPPPARVRVAVRLRPFVDGTAGASDPPCVRGMDSCSLEIANWRNHQETLKYQFDAFYGERSTQQDIYAGSVQPILRHLLEGQNASVLAYGPTGAGKTHTMLGSPEQPGVIPRALMDLLQLTREEGAEGRPWALSVTMSYLEIYQEKVLDLLDPASGDLVIREDCRGNILIPGLSQKPISSFADFERHFLPASRNRTVGATRLNQRSSRSHAVLLVKVDQRERLAPFRQREGKLYLIDLAGSEDNRRTGNKGLRLKESGAINTSLFVLGKVVDALNQGLPRVPYRDSKLTRLLQDSLGGSAHSILIANIAPERRFYLDTVSALNFAARSKEVINRPFTNESLQPHALGPVKLSQKELLGPPEAKRARGPEEEEIGSPEPMAAPASASQKLSPLQKLSSMDPAMLERLLSLDRLLASQGSQGAPLLSTPKRERMVLMKTVEEKDLEIERLKTKQKELEAKMLAQKAEEKENHCPTMLRPLSHRTVTGAKPLKKAVVMPLQLIQEQAASPNAEIHILKNKGRKRKLESLDALEPEEKAEDCWELQISPELLAHGRQKILDLLNEGSARDLRSLQRIGPKKAQLIVGWRELHGPFSQVEDLERVEGITGKQMESFLKANILGLAAGQRCGAS</sequence>
<organism>
    <name type="scientific">Homo sapiens</name>
    <name type="common">Human</name>
    <dbReference type="NCBI Taxonomy" id="9606"/>
    <lineage>
        <taxon>Eukaryota</taxon>
        <taxon>Metazoa</taxon>
        <taxon>Chordata</taxon>
        <taxon>Craniata</taxon>
        <taxon>Vertebrata</taxon>
        <taxon>Euteleostomi</taxon>
        <taxon>Mammalia</taxon>
        <taxon>Eutheria</taxon>
        <taxon>Euarchontoglires</taxon>
        <taxon>Primates</taxon>
        <taxon>Haplorrhini</taxon>
        <taxon>Catarrhini</taxon>
        <taxon>Hominidae</taxon>
        <taxon>Homo</taxon>
    </lineage>
</organism>
<reference key="1">
    <citation type="journal article" date="1996" name="EMBO J.">
        <title>Kid, a novel kinesin-like DNA binding protein, is localized to chromosomes and the mitotic spindle.</title>
        <authorList>
            <person name="Tokai N."/>
            <person name="Fujimoto-Nishiyama A."/>
            <person name="Toyoshima Y."/>
            <person name="Yonemura S."/>
            <person name="Tsukita S."/>
            <person name="Inoue J."/>
            <person name="Yamamoto T."/>
        </authorList>
    </citation>
    <scope>NUCLEOTIDE SEQUENCE [MRNA] (ISOFORM 1)</scope>
    <scope>SUBCELLULAR LOCATION</scope>
</reference>
<reference key="2">
    <citation type="journal article" date="1998" name="Genomics">
        <title>Human genes for KNSL4 and MAZ are located close to one another on chromosome 16p11.2.</title>
        <authorList>
            <person name="Song J."/>
            <person name="Murakami H."/>
            <person name="Yang Z.Q."/>
            <person name="Koga C."/>
            <person name="Adati N."/>
            <person name="Murata T."/>
            <person name="Geltinger C."/>
            <person name="Saito-Ohara F."/>
            <person name="Ikeuchi T."/>
            <person name="Matsumura M."/>
            <person name="Itakura K."/>
            <person name="Kanazawa I."/>
            <person name="Sun K."/>
            <person name="Yokoyama K.K."/>
        </authorList>
    </citation>
    <scope>NUCLEOTIDE SEQUENCE [GENOMIC DNA]</scope>
</reference>
<reference key="3">
    <citation type="journal article" date="2004" name="Nat. Genet.">
        <title>Complete sequencing and characterization of 21,243 full-length human cDNAs.</title>
        <authorList>
            <person name="Ota T."/>
            <person name="Suzuki Y."/>
            <person name="Nishikawa T."/>
            <person name="Otsuki T."/>
            <person name="Sugiyama T."/>
            <person name="Irie R."/>
            <person name="Wakamatsu A."/>
            <person name="Hayashi K."/>
            <person name="Sato H."/>
            <person name="Nagai K."/>
            <person name="Kimura K."/>
            <person name="Makita H."/>
            <person name="Sekine M."/>
            <person name="Obayashi M."/>
            <person name="Nishi T."/>
            <person name="Shibahara T."/>
            <person name="Tanaka T."/>
            <person name="Ishii S."/>
            <person name="Yamamoto J."/>
            <person name="Saito K."/>
            <person name="Kawai Y."/>
            <person name="Isono Y."/>
            <person name="Nakamura Y."/>
            <person name="Nagahari K."/>
            <person name="Murakami K."/>
            <person name="Yasuda T."/>
            <person name="Iwayanagi T."/>
            <person name="Wagatsuma M."/>
            <person name="Shiratori A."/>
            <person name="Sudo H."/>
            <person name="Hosoiri T."/>
            <person name="Kaku Y."/>
            <person name="Kodaira H."/>
            <person name="Kondo H."/>
            <person name="Sugawara M."/>
            <person name="Takahashi M."/>
            <person name="Kanda K."/>
            <person name="Yokoi T."/>
            <person name="Furuya T."/>
            <person name="Kikkawa E."/>
            <person name="Omura Y."/>
            <person name="Abe K."/>
            <person name="Kamihara K."/>
            <person name="Katsuta N."/>
            <person name="Sato K."/>
            <person name="Tanikawa M."/>
            <person name="Yamazaki M."/>
            <person name="Ninomiya K."/>
            <person name="Ishibashi T."/>
            <person name="Yamashita H."/>
            <person name="Murakawa K."/>
            <person name="Fujimori K."/>
            <person name="Tanai H."/>
            <person name="Kimata M."/>
            <person name="Watanabe M."/>
            <person name="Hiraoka S."/>
            <person name="Chiba Y."/>
            <person name="Ishida S."/>
            <person name="Ono Y."/>
            <person name="Takiguchi S."/>
            <person name="Watanabe S."/>
            <person name="Yosida M."/>
            <person name="Hotuta T."/>
            <person name="Kusano J."/>
            <person name="Kanehori K."/>
            <person name="Takahashi-Fujii A."/>
            <person name="Hara H."/>
            <person name="Tanase T.-O."/>
            <person name="Nomura Y."/>
            <person name="Togiya S."/>
            <person name="Komai F."/>
            <person name="Hara R."/>
            <person name="Takeuchi K."/>
            <person name="Arita M."/>
            <person name="Imose N."/>
            <person name="Musashino K."/>
            <person name="Yuuki H."/>
            <person name="Oshima A."/>
            <person name="Sasaki N."/>
            <person name="Aotsuka S."/>
            <person name="Yoshikawa Y."/>
            <person name="Matsunawa H."/>
            <person name="Ichihara T."/>
            <person name="Shiohata N."/>
            <person name="Sano S."/>
            <person name="Moriya S."/>
            <person name="Momiyama H."/>
            <person name="Satoh N."/>
            <person name="Takami S."/>
            <person name="Terashima Y."/>
            <person name="Suzuki O."/>
            <person name="Nakagawa S."/>
            <person name="Senoh A."/>
            <person name="Mizoguchi H."/>
            <person name="Goto Y."/>
            <person name="Shimizu F."/>
            <person name="Wakebe H."/>
            <person name="Hishigaki H."/>
            <person name="Watanabe T."/>
            <person name="Sugiyama A."/>
            <person name="Takemoto M."/>
            <person name="Kawakami B."/>
            <person name="Yamazaki M."/>
            <person name="Watanabe K."/>
            <person name="Kumagai A."/>
            <person name="Itakura S."/>
            <person name="Fukuzumi Y."/>
            <person name="Fujimori Y."/>
            <person name="Komiyama M."/>
            <person name="Tashiro H."/>
            <person name="Tanigami A."/>
            <person name="Fujiwara T."/>
            <person name="Ono T."/>
            <person name="Yamada K."/>
            <person name="Fujii Y."/>
            <person name="Ozaki K."/>
            <person name="Hirao M."/>
            <person name="Ohmori Y."/>
            <person name="Kawabata A."/>
            <person name="Hikiji T."/>
            <person name="Kobatake N."/>
            <person name="Inagaki H."/>
            <person name="Ikema Y."/>
            <person name="Okamoto S."/>
            <person name="Okitani R."/>
            <person name="Kawakami T."/>
            <person name="Noguchi S."/>
            <person name="Itoh T."/>
            <person name="Shigeta K."/>
            <person name="Senba T."/>
            <person name="Matsumura K."/>
            <person name="Nakajima Y."/>
            <person name="Mizuno T."/>
            <person name="Morinaga M."/>
            <person name="Sasaki M."/>
            <person name="Togashi T."/>
            <person name="Oyama M."/>
            <person name="Hata H."/>
            <person name="Watanabe M."/>
            <person name="Komatsu T."/>
            <person name="Mizushima-Sugano J."/>
            <person name="Satoh T."/>
            <person name="Shirai Y."/>
            <person name="Takahashi Y."/>
            <person name="Nakagawa K."/>
            <person name="Okumura K."/>
            <person name="Nagase T."/>
            <person name="Nomura N."/>
            <person name="Kikuchi H."/>
            <person name="Masuho Y."/>
            <person name="Yamashita R."/>
            <person name="Nakai K."/>
            <person name="Yada T."/>
            <person name="Nakamura Y."/>
            <person name="Ohara O."/>
            <person name="Isogai T."/>
            <person name="Sugano S."/>
        </authorList>
    </citation>
    <scope>NUCLEOTIDE SEQUENCE [LARGE SCALE MRNA] (ISOFORMS 1 AND 2)</scope>
    <source>
        <tissue>Adrenal gland</tissue>
        <tissue>Amygdala</tissue>
        <tissue>Testis</tissue>
    </source>
</reference>
<reference key="4">
    <citation type="submission" date="2003-05" db="EMBL/GenBank/DDBJ databases">
        <title>Cloning of human full-length CDSs in BD Creator(TM) system donor vector.</title>
        <authorList>
            <person name="Kalnine N."/>
            <person name="Chen X."/>
            <person name="Rolfs A."/>
            <person name="Halleck A."/>
            <person name="Hines L."/>
            <person name="Eisenstein S."/>
            <person name="Koundinya M."/>
            <person name="Raphael J."/>
            <person name="Moreira D."/>
            <person name="Kelley T."/>
            <person name="LaBaer J."/>
            <person name="Lin Y."/>
            <person name="Phelan M."/>
            <person name="Farmer A."/>
        </authorList>
    </citation>
    <scope>NUCLEOTIDE SEQUENCE [LARGE SCALE MRNA] (ISOFORM 1)</scope>
</reference>
<reference key="5">
    <citation type="submission" date="2005-04" db="EMBL/GenBank/DDBJ databases">
        <authorList>
            <person name="Totoki Y."/>
            <person name="Toyoda A."/>
            <person name="Takeda T."/>
            <person name="Sakaki Y."/>
            <person name="Tanaka A."/>
            <person name="Yokoyama S."/>
        </authorList>
    </citation>
    <scope>NUCLEOTIDE SEQUENCE [LARGE SCALE MRNA] (ISOFORM 1)</scope>
    <source>
        <tissue>Kidney epithelium</tissue>
    </source>
</reference>
<reference key="6">
    <citation type="journal article" date="1999" name="Genomics">
        <title>Genome duplications and other features in 12 Mb of DNA sequence from human chromosome 16p and 16q.</title>
        <authorList>
            <person name="Loftus B.J."/>
            <person name="Kim U.-J."/>
            <person name="Sneddon V.P."/>
            <person name="Kalush F."/>
            <person name="Brandon R."/>
            <person name="Fuhrmann J."/>
            <person name="Mason T."/>
            <person name="Crosby M.L."/>
            <person name="Barnstead M."/>
            <person name="Cronin L."/>
            <person name="Mays A.D."/>
            <person name="Cao Y."/>
            <person name="Xu R.X."/>
            <person name="Kang H.-L."/>
            <person name="Mitchell S."/>
            <person name="Eichler E.E."/>
            <person name="Harris P.C."/>
            <person name="Venter J.C."/>
            <person name="Adams M.D."/>
        </authorList>
    </citation>
    <scope>NUCLEOTIDE SEQUENCE [LARGE SCALE GENOMIC DNA]</scope>
</reference>
<reference key="7">
    <citation type="journal article" date="2004" name="Nature">
        <title>The sequence and analysis of duplication-rich human chromosome 16.</title>
        <authorList>
            <person name="Martin J."/>
            <person name="Han C."/>
            <person name="Gordon L.A."/>
            <person name="Terry A."/>
            <person name="Prabhakar S."/>
            <person name="She X."/>
            <person name="Xie G."/>
            <person name="Hellsten U."/>
            <person name="Chan Y.M."/>
            <person name="Altherr M."/>
            <person name="Couronne O."/>
            <person name="Aerts A."/>
            <person name="Bajorek E."/>
            <person name="Black S."/>
            <person name="Blumer H."/>
            <person name="Branscomb E."/>
            <person name="Brown N.C."/>
            <person name="Bruno W.J."/>
            <person name="Buckingham J.M."/>
            <person name="Callen D.F."/>
            <person name="Campbell C.S."/>
            <person name="Campbell M.L."/>
            <person name="Campbell E.W."/>
            <person name="Caoile C."/>
            <person name="Challacombe J.F."/>
            <person name="Chasteen L.A."/>
            <person name="Chertkov O."/>
            <person name="Chi H.C."/>
            <person name="Christensen M."/>
            <person name="Clark L.M."/>
            <person name="Cohn J.D."/>
            <person name="Denys M."/>
            <person name="Detter J.C."/>
            <person name="Dickson M."/>
            <person name="Dimitrijevic-Bussod M."/>
            <person name="Escobar J."/>
            <person name="Fawcett J.J."/>
            <person name="Flowers D."/>
            <person name="Fotopulos D."/>
            <person name="Glavina T."/>
            <person name="Gomez M."/>
            <person name="Gonzales E."/>
            <person name="Goodstein D."/>
            <person name="Goodwin L.A."/>
            <person name="Grady D.L."/>
            <person name="Grigoriev I."/>
            <person name="Groza M."/>
            <person name="Hammon N."/>
            <person name="Hawkins T."/>
            <person name="Haydu L."/>
            <person name="Hildebrand C.E."/>
            <person name="Huang W."/>
            <person name="Israni S."/>
            <person name="Jett J."/>
            <person name="Jewett P.B."/>
            <person name="Kadner K."/>
            <person name="Kimball H."/>
            <person name="Kobayashi A."/>
            <person name="Krawczyk M.-C."/>
            <person name="Leyba T."/>
            <person name="Longmire J.L."/>
            <person name="Lopez F."/>
            <person name="Lou Y."/>
            <person name="Lowry S."/>
            <person name="Ludeman T."/>
            <person name="Manohar C.F."/>
            <person name="Mark G.A."/>
            <person name="McMurray K.L."/>
            <person name="Meincke L.J."/>
            <person name="Morgan J."/>
            <person name="Moyzis R.K."/>
            <person name="Mundt M.O."/>
            <person name="Munk A.C."/>
            <person name="Nandkeshwar R.D."/>
            <person name="Pitluck S."/>
            <person name="Pollard M."/>
            <person name="Predki P."/>
            <person name="Parson-Quintana B."/>
            <person name="Ramirez L."/>
            <person name="Rash S."/>
            <person name="Retterer J."/>
            <person name="Ricke D.O."/>
            <person name="Robinson D.L."/>
            <person name="Rodriguez A."/>
            <person name="Salamov A."/>
            <person name="Saunders E.H."/>
            <person name="Scott D."/>
            <person name="Shough T."/>
            <person name="Stallings R.L."/>
            <person name="Stalvey M."/>
            <person name="Sutherland R.D."/>
            <person name="Tapia R."/>
            <person name="Tesmer J.G."/>
            <person name="Thayer N."/>
            <person name="Thompson L.S."/>
            <person name="Tice H."/>
            <person name="Torney D.C."/>
            <person name="Tran-Gyamfi M."/>
            <person name="Tsai M."/>
            <person name="Ulanovsky L.E."/>
            <person name="Ustaszewska A."/>
            <person name="Vo N."/>
            <person name="White P.S."/>
            <person name="Williams A.L."/>
            <person name="Wills P.L."/>
            <person name="Wu J.-R."/>
            <person name="Wu K."/>
            <person name="Yang J."/>
            <person name="DeJong P."/>
            <person name="Bruce D."/>
            <person name="Doggett N.A."/>
            <person name="Deaven L."/>
            <person name="Schmutz J."/>
            <person name="Grimwood J."/>
            <person name="Richardson P."/>
            <person name="Rokhsar D.S."/>
            <person name="Eichler E.E."/>
            <person name="Gilna P."/>
            <person name="Lucas S.M."/>
            <person name="Myers R.M."/>
            <person name="Rubin E.M."/>
            <person name="Pennacchio L.A."/>
        </authorList>
    </citation>
    <scope>NUCLEOTIDE SEQUENCE [LARGE SCALE GENOMIC DNA]</scope>
</reference>
<reference key="8">
    <citation type="submission" date="2005-07" db="EMBL/GenBank/DDBJ databases">
        <authorList>
            <person name="Mural R.J."/>
            <person name="Istrail S."/>
            <person name="Sutton G.G."/>
            <person name="Florea L."/>
            <person name="Halpern A.L."/>
            <person name="Mobarry C.M."/>
            <person name="Lippert R."/>
            <person name="Walenz B."/>
            <person name="Shatkay H."/>
            <person name="Dew I."/>
            <person name="Miller J.R."/>
            <person name="Flanigan M.J."/>
            <person name="Edwards N.J."/>
            <person name="Bolanos R."/>
            <person name="Fasulo D."/>
            <person name="Halldorsson B.V."/>
            <person name="Hannenhalli S."/>
            <person name="Turner R."/>
            <person name="Yooseph S."/>
            <person name="Lu F."/>
            <person name="Nusskern D.R."/>
            <person name="Shue B.C."/>
            <person name="Zheng X.H."/>
            <person name="Zhong F."/>
            <person name="Delcher A.L."/>
            <person name="Huson D.H."/>
            <person name="Kravitz S.A."/>
            <person name="Mouchard L."/>
            <person name="Reinert K."/>
            <person name="Remington K.A."/>
            <person name="Clark A.G."/>
            <person name="Waterman M.S."/>
            <person name="Eichler E.E."/>
            <person name="Adams M.D."/>
            <person name="Hunkapiller M.W."/>
            <person name="Myers E.W."/>
            <person name="Venter J.C."/>
        </authorList>
    </citation>
    <scope>NUCLEOTIDE SEQUENCE [LARGE SCALE GENOMIC DNA]</scope>
</reference>
<reference key="9">
    <citation type="journal article" date="2004" name="Genome Res.">
        <title>The status, quality, and expansion of the NIH full-length cDNA project: the Mammalian Gene Collection (MGC).</title>
        <authorList>
            <consortium name="The MGC Project Team"/>
        </authorList>
    </citation>
    <scope>NUCLEOTIDE SEQUENCE [LARGE SCALE MRNA] (ISOFORM 1)</scope>
    <source>
        <tissue>Brain</tissue>
        <tissue>Lung</tissue>
    </source>
</reference>
<reference key="10">
    <citation type="journal article" date="2000" name="Oncogene">
        <title>SIAH-1 interacts with alpha-tubulin and degrades the kinesin Kid by the proteasome pathway during mitosis.</title>
        <authorList>
            <person name="Germani A."/>
            <person name="Bruzzoni-Giovanelli H."/>
            <person name="Fellous A."/>
            <person name="Gisselbrecht S."/>
            <person name="Varin-Blank N."/>
            <person name="Calvo F."/>
        </authorList>
    </citation>
    <scope>INTERACTION WITH SIAH1</scope>
    <scope>UBIQUITINATION</scope>
    <scope>PROTEASOMAL DEGRADATION</scope>
</reference>
<reference key="11">
    <citation type="journal article" date="2007" name="Science">
        <title>ATM and ATR substrate analysis reveals extensive protein networks responsive to DNA damage.</title>
        <authorList>
            <person name="Matsuoka S."/>
            <person name="Ballif B.A."/>
            <person name="Smogorzewska A."/>
            <person name="McDonald E.R. III"/>
            <person name="Hurov K.E."/>
            <person name="Luo J."/>
            <person name="Bakalarski C.E."/>
            <person name="Zhao Z."/>
            <person name="Solimini N."/>
            <person name="Lerenthal Y."/>
            <person name="Shiloh Y."/>
            <person name="Gygi S.P."/>
            <person name="Elledge S.J."/>
        </authorList>
    </citation>
    <scope>PHOSPHORYLATION [LARGE SCALE ANALYSIS] AT SER-452</scope>
    <scope>IDENTIFICATION BY MASS SPECTROMETRY [LARGE SCALE ANALYSIS]</scope>
    <source>
        <tissue>Embryonic kidney</tissue>
    </source>
</reference>
<reference key="12">
    <citation type="journal article" date="2008" name="Curr. Biol.">
        <title>The spindle protein CHICA mediates localization of the chromokinesin Kid to the mitotic spindle.</title>
        <authorList>
            <person name="Santamaria A."/>
            <person name="Nagel S."/>
            <person name="Sillje H.H.W."/>
            <person name="Nigg E.A."/>
        </authorList>
    </citation>
    <scope>INTERACTION WITH FAM83D</scope>
</reference>
<reference key="13">
    <citation type="journal article" date="2008" name="Proc. Natl. Acad. Sci. U.S.A.">
        <title>A quantitative atlas of mitotic phosphorylation.</title>
        <authorList>
            <person name="Dephoure N."/>
            <person name="Zhou C."/>
            <person name="Villen J."/>
            <person name="Beausoleil S.A."/>
            <person name="Bakalarski C.E."/>
            <person name="Elledge S.J."/>
            <person name="Gygi S.P."/>
        </authorList>
    </citation>
    <scope>PHOSPHORYLATION [LARGE SCALE ANALYSIS] AT SER-412 AND SER-427</scope>
    <scope>IDENTIFICATION BY MASS SPECTROMETRY [LARGE SCALE ANALYSIS]</scope>
    <source>
        <tissue>Cervix carcinoma</tissue>
    </source>
</reference>
<reference key="14">
    <citation type="journal article" date="2009" name="Sci. Signal.">
        <title>Quantitative phosphoproteomic analysis of T cell receptor signaling reveals system-wide modulation of protein-protein interactions.</title>
        <authorList>
            <person name="Mayya V."/>
            <person name="Lundgren D.H."/>
            <person name="Hwang S.-I."/>
            <person name="Rezaul K."/>
            <person name="Wu L."/>
            <person name="Eng J.K."/>
            <person name="Rodionov V."/>
            <person name="Han D.K."/>
        </authorList>
    </citation>
    <scope>PHOSPHORYLATION [LARGE SCALE ANALYSIS] AT SER-412 AND SER-427</scope>
    <scope>IDENTIFICATION BY MASS SPECTROMETRY [LARGE SCALE ANALYSIS]</scope>
    <source>
        <tissue>Leukemic T-cell</tissue>
    </source>
</reference>
<reference key="15">
    <citation type="journal article" date="2010" name="Sci. Signal.">
        <title>Quantitative phosphoproteomics reveals widespread full phosphorylation site occupancy during mitosis.</title>
        <authorList>
            <person name="Olsen J.V."/>
            <person name="Vermeulen M."/>
            <person name="Santamaria A."/>
            <person name="Kumar C."/>
            <person name="Miller M.L."/>
            <person name="Jensen L.J."/>
            <person name="Gnad F."/>
            <person name="Cox J."/>
            <person name="Jensen T.S."/>
            <person name="Nigg E.A."/>
            <person name="Brunak S."/>
            <person name="Mann M."/>
        </authorList>
    </citation>
    <scope>PHOSPHORYLATION [LARGE SCALE ANALYSIS] AT SER-412; SER-543; SER-562 AND SER-581</scope>
    <scope>IDENTIFICATION BY MASS SPECTROMETRY [LARGE SCALE ANALYSIS]</scope>
    <source>
        <tissue>Cervix carcinoma</tissue>
    </source>
</reference>
<reference key="16">
    <citation type="journal article" date="2011" name="Am. J. Hum. Genet.">
        <title>Whole-exome sequencing identifies mutations of KIF22 in spondyloepimetaphyseal dysplasia with joint laxity, leptodactylic type.</title>
        <authorList>
            <person name="Min B.J."/>
            <person name="Kim N."/>
            <person name="Chung T."/>
            <person name="Kim O.H."/>
            <person name="Nishimura G."/>
            <person name="Chung C.Y."/>
            <person name="Song H.R."/>
            <person name="Kim H.W."/>
            <person name="Lee H.R."/>
            <person name="Kim J."/>
            <person name="Kang T.H."/>
            <person name="Seo M.E."/>
            <person name="Yang S.D."/>
            <person name="Kim D.H."/>
            <person name="Lee S.B."/>
            <person name="Kim J.I."/>
            <person name="Seo J.S."/>
            <person name="Choi J.Y."/>
            <person name="Kang D."/>
            <person name="Kim D."/>
            <person name="Park W.Y."/>
            <person name="Cho T.J."/>
        </authorList>
    </citation>
    <scope>TISSUE SPECIFICITY</scope>
    <scope>VARIANTS SEMDJL2 SER-148; LEU-148 AND GLN-149</scope>
    <scope>VARIANT GLN-232</scope>
</reference>
<reference key="17">
    <citation type="journal article" date="2011" name="Sci. Signal.">
        <title>System-wide temporal characterization of the proteome and phosphoproteome of human embryonic stem cell differentiation.</title>
        <authorList>
            <person name="Rigbolt K.T."/>
            <person name="Prokhorova T.A."/>
            <person name="Akimov V."/>
            <person name="Henningsen J."/>
            <person name="Johansen P.T."/>
            <person name="Kratchmarova I."/>
            <person name="Kassem M."/>
            <person name="Mann M."/>
            <person name="Olsen J.V."/>
            <person name="Blagoev B."/>
        </authorList>
    </citation>
    <scope>IDENTIFICATION BY MASS SPECTROMETRY [LARGE SCALE ANALYSIS]</scope>
</reference>
<reference key="18">
    <citation type="journal article" date="2013" name="J. Proteome Res.">
        <title>Toward a comprehensive characterization of a human cancer cell phosphoproteome.</title>
        <authorList>
            <person name="Zhou H."/>
            <person name="Di Palma S."/>
            <person name="Preisinger C."/>
            <person name="Peng M."/>
            <person name="Polat A.N."/>
            <person name="Heck A.J."/>
            <person name="Mohammed S."/>
        </authorList>
    </citation>
    <scope>PHOSPHORYLATION [LARGE SCALE ANALYSIS] AT SER-412; SER-427 AND SER-562</scope>
    <scope>IDENTIFICATION BY MASS SPECTROMETRY [LARGE SCALE ANALYSIS]</scope>
    <source>
        <tissue>Cervix carcinoma</tissue>
        <tissue>Erythroleukemia</tissue>
    </source>
</reference>
<reference key="19">
    <citation type="journal article" date="2015" name="Nat. Commun.">
        <title>Chromokinesin Kid and kinetochore kinesin CENP-E differentially support chromosome congression without end-on attachment to microtubules.</title>
        <authorList>
            <person name="Iemura K."/>
            <person name="Tanaka K."/>
        </authorList>
    </citation>
    <scope>FUNCTION</scope>
</reference>
<reference key="20">
    <citation type="journal article" date="2017" name="Nat. Struct. Mol. Biol.">
        <title>Site-specific mapping of the human SUMO proteome reveals co-modification with phosphorylation.</title>
        <authorList>
            <person name="Hendriks I.A."/>
            <person name="Lyon D."/>
            <person name="Young C."/>
            <person name="Jensen L.J."/>
            <person name="Vertegaal A.C."/>
            <person name="Nielsen M.L."/>
        </authorList>
    </citation>
    <scope>SUMOYLATION [LARGE SCALE ANALYSIS] AT LYS-465</scope>
    <scope>IDENTIFICATION BY MASS SPECTROMETRY [LARGE SCALE ANALYSIS]</scope>
</reference>
<reference key="21">
    <citation type="submission" date="2007-08" db="PDB data bank">
        <title>Solution structure of RSGI RUH-070, a C-terminal domain of kinesin-like protein KIF22 from human.</title>
        <authorList>
            <consortium name="RIKEN structural genomics initiative (RSGI)"/>
        </authorList>
    </citation>
    <scope>STRUCTURE BY NMR OF 570-660</scope>
</reference>
<reference key="22">
    <citation type="journal article" date="2011" name="Am. J. Hum. Genet.">
        <title>Recurrent dominant mutations affecting two adjacent residues in the motor domain of the monomeric kinesin KIF22 result in skeletal dysplasia and joint laxity.</title>
        <authorList>
            <person name="Boyden E.D."/>
            <person name="Campos-Xavier A.B."/>
            <person name="Kalamajski S."/>
            <person name="Cameron T.L."/>
            <person name="Suarez P."/>
            <person name="Tanackovic G."/>
            <person name="Andria G."/>
            <person name="Ballhausen D."/>
            <person name="Briggs M.D."/>
            <person name="Hartley C."/>
            <person name="Cohn D.H."/>
            <person name="Davidson H.R."/>
            <person name="Hall C."/>
            <person name="Ikegawa S."/>
            <person name="Jouk P.S."/>
            <person name="Konig R."/>
            <person name="Megarbane A."/>
            <person name="Nishimura G."/>
            <person name="Lachman R.S."/>
            <person name="Mortier G."/>
            <person name="Rimoin D.L."/>
            <person name="Rogers R.C."/>
            <person name="Rossi M."/>
            <person name="Sawada H."/>
            <person name="Scott R."/>
            <person name="Unger S."/>
            <person name="Valadares E.R."/>
            <person name="Bateman J.F."/>
            <person name="Warman M.L."/>
            <person name="Superti-Furga A."/>
            <person name="Bonafe L."/>
        </authorList>
    </citation>
    <scope>VARIANTS SEMDJL2 LEU-148; GLN-149 AND LEU-149</scope>
</reference>
<reference key="23">
    <citation type="journal article" date="2012" name="Am. J. Hum. Genet.">
        <authorList>
            <person name="Boyden E.D."/>
            <person name="Campos-Xavier A.B."/>
            <person name="Kalamajski S."/>
            <person name="Cameron T.L."/>
            <person name="Suarez P."/>
            <person name="Tanackovic G."/>
            <person name="Andria G."/>
            <person name="Ballhausen D."/>
            <person name="Briggs M.D."/>
            <person name="Hartley C."/>
            <person name="Cohn D.H."/>
            <person name="Davidson H.R."/>
            <person name="Hall C."/>
            <person name="Ikegawa S."/>
            <person name="Jouk P.S."/>
            <person name="Konig R."/>
            <person name="Megarbane A."/>
            <person name="Nishimura G."/>
            <person name="Lachman R.S."/>
            <person name="Mortier G."/>
            <person name="Rimoin D.L."/>
            <person name="Rogers R.C."/>
            <person name="Rossi M."/>
            <person name="Sawada H."/>
            <person name="Scott R."/>
            <person name="Unger S."/>
            <person name="Valadares E.R."/>
            <person name="Bateman J.F."/>
            <person name="Warman M.L."/>
            <person name="Superti-Furga A."/>
            <person name="Bonafe L."/>
        </authorList>
    </citation>
    <scope>ERRATUM OF PUBMED:22152678</scope>
</reference>
<feature type="chain" id="PRO_0000125433" description="Kinesin-like protein KIF22">
    <location>
        <begin position="1"/>
        <end position="665"/>
    </location>
</feature>
<feature type="domain" description="Kinesin motor" evidence="3">
    <location>
        <begin position="43"/>
        <end position="368"/>
    </location>
</feature>
<feature type="region of interest" description="Disordered" evidence="4">
    <location>
        <begin position="379"/>
        <end position="428"/>
    </location>
</feature>
<feature type="coiled-coil region" evidence="2">
    <location>
        <begin position="465"/>
        <end position="508"/>
    </location>
</feature>
<feature type="compositionally biased region" description="Low complexity" evidence="4">
    <location>
        <begin position="412"/>
        <end position="428"/>
    </location>
</feature>
<feature type="binding site" evidence="3">
    <location>
        <begin position="127"/>
        <end position="134"/>
    </location>
    <ligand>
        <name>ATP</name>
        <dbReference type="ChEBI" id="CHEBI:30616"/>
    </ligand>
</feature>
<feature type="modified residue" description="Phosphoserine" evidence="14 15 16 17">
    <location>
        <position position="412"/>
    </location>
</feature>
<feature type="modified residue" description="Phosphoserine" evidence="14 15 17">
    <location>
        <position position="427"/>
    </location>
</feature>
<feature type="modified residue" description="Phosphoserine" evidence="13">
    <location>
        <position position="452"/>
    </location>
</feature>
<feature type="modified residue" description="Phosphoserine" evidence="16">
    <location>
        <position position="543"/>
    </location>
</feature>
<feature type="modified residue" description="Phosphoserine" evidence="16 17">
    <location>
        <position position="562"/>
    </location>
</feature>
<feature type="modified residue" description="Phosphoserine" evidence="16">
    <location>
        <position position="581"/>
    </location>
</feature>
<feature type="cross-link" description="Glycyl lysine isopeptide (Lys-Gly) (interchain with G-Cter in SUMO2)" evidence="18">
    <location>
        <position position="465"/>
    </location>
</feature>
<feature type="splice variant" id="VSP_046428" description="In isoform 2." evidence="11">
    <location>
        <begin position="1"/>
        <end position="68"/>
    </location>
</feature>
<feature type="sequence variant" id="VAR_067345" description="In SEMDJL2; dbSNP:rs193922921." evidence="7 8">
    <original>P</original>
    <variation>L</variation>
    <location>
        <position position="148"/>
    </location>
</feature>
<feature type="sequence variant" id="VAR_067346" description="In SEMDJL2; dbSNP:rs193922920." evidence="7">
    <original>P</original>
    <variation>S</variation>
    <location>
        <position position="148"/>
    </location>
</feature>
<feature type="sequence variant" id="VAR_067347" description="In SEMDJL2; dbSNP:rs193922922." evidence="8">
    <original>R</original>
    <variation>L</variation>
    <location>
        <position position="149"/>
    </location>
</feature>
<feature type="sequence variant" id="VAR_067348" description="In SEMDJL2; dbSNP:rs193922922." evidence="7 8">
    <original>R</original>
    <variation>Q</variation>
    <location>
        <position position="149"/>
    </location>
</feature>
<feature type="sequence variant" id="VAR_067349" description="In dbSNP:rs201659270." evidence="7">
    <original>R</original>
    <variation>Q</variation>
    <location>
        <position position="232"/>
    </location>
</feature>
<feature type="sequence conflict" description="In Ref. 2; BAA33063." evidence="12" ref="2">
    <location>
        <position position="24"/>
    </location>
</feature>
<feature type="sequence conflict" description="In Ref. 2; BAA33063." evidence="12" ref="2">
    <original>S</original>
    <variation>KV</variation>
    <location>
        <position position="122"/>
    </location>
</feature>
<feature type="sequence conflict" description="In Ref. 2." evidence="12" ref="2">
    <original>HTMLGSPEQPGVIPRALMDLLQLTREEGAEGRPWA</original>
    <variation>THAGQPRATWGDPAGSHGPPAAHKGGGCRGPAMG</variation>
    <location>
        <begin position="135"/>
        <end position="169"/>
    </location>
</feature>
<feature type="sequence conflict" description="In Ref. 5; BAD97151." evidence="12" ref="5">
    <original>S</original>
    <variation>N</variation>
    <location>
        <position position="216"/>
    </location>
</feature>
<feature type="sequence conflict" description="In Ref. 3; BAG35167." evidence="12" ref="3">
    <original>L</original>
    <variation>P</variation>
    <location>
        <position position="270"/>
    </location>
</feature>
<feature type="sequence conflict" description="In Ref. 2; BAA33063." evidence="12" ref="2">
    <original>V</original>
    <variation>A</variation>
    <location>
        <position position="303"/>
    </location>
</feature>
<feature type="sequence conflict" description="In Ref. 5; BAD97151." evidence="12" ref="5">
    <original>H</original>
    <variation>R</variation>
    <location>
        <position position="381"/>
    </location>
</feature>
<feature type="sequence conflict" description="In Ref. 2; BAA33063." evidence="12" ref="2">
    <original>APASASQKLSPLQKLSSMDPAMLERLLSLDRLLASQGSQ</original>
    <variation>SSSLCLPETQPPTEAKAAWTRPCGAPPQLGPSACLPGEP</variation>
    <location>
        <begin position="418"/>
        <end position="456"/>
    </location>
</feature>
<feature type="sequence conflict" description="In Ref. 2; BAA33063." evidence="12" ref="2">
    <original>ENHCPTMLR</original>
    <variation>RTIVPQCSG</variation>
    <location>
        <begin position="505"/>
        <end position="513"/>
    </location>
</feature>
<feature type="strand" evidence="20">
    <location>
        <begin position="45"/>
        <end position="50"/>
    </location>
</feature>
<feature type="strand" evidence="20">
    <location>
        <begin position="73"/>
        <end position="77"/>
    </location>
</feature>
<feature type="strand" evidence="20">
    <location>
        <begin position="85"/>
        <end position="89"/>
    </location>
</feature>
<feature type="strand" evidence="20">
    <location>
        <begin position="91"/>
        <end position="94"/>
    </location>
</feature>
<feature type="helix" evidence="20">
    <location>
        <begin position="100"/>
        <end position="107"/>
    </location>
</feature>
<feature type="helix" evidence="20">
    <location>
        <begin position="109"/>
        <end position="111"/>
    </location>
</feature>
<feature type="helix" evidence="20">
    <location>
        <begin position="112"/>
        <end position="115"/>
    </location>
</feature>
<feature type="turn" evidence="20">
    <location>
        <begin position="116"/>
        <end position="118"/>
    </location>
</feature>
<feature type="strand" evidence="20">
    <location>
        <begin position="121"/>
        <end position="126"/>
    </location>
</feature>
<feature type="helix" evidence="20">
    <location>
        <begin position="133"/>
        <end position="137"/>
    </location>
</feature>
<feature type="strand" evidence="20">
    <location>
        <begin position="141"/>
        <end position="144"/>
    </location>
</feature>
<feature type="helix" evidence="20">
    <location>
        <begin position="146"/>
        <end position="161"/>
    </location>
</feature>
<feature type="strand" evidence="20">
    <location>
        <begin position="166"/>
        <end position="180"/>
    </location>
</feature>
<feature type="strand" evidence="20">
    <location>
        <begin position="183"/>
        <end position="189"/>
    </location>
</feature>
<feature type="strand" evidence="20">
    <location>
        <begin position="213"/>
        <end position="217"/>
    </location>
</feature>
<feature type="helix" evidence="20">
    <location>
        <begin position="218"/>
        <end position="229"/>
    </location>
</feature>
<feature type="strand" evidence="20">
    <location>
        <begin position="245"/>
        <end position="260"/>
    </location>
</feature>
<feature type="strand" evidence="20">
    <location>
        <begin position="265"/>
        <end position="274"/>
    </location>
</feature>
<feature type="helix" evidence="20">
    <location>
        <begin position="278"/>
        <end position="280"/>
    </location>
</feature>
<feature type="helix" evidence="20">
    <location>
        <begin position="299"/>
        <end position="313"/>
    </location>
</feature>
<feature type="helix" evidence="20">
    <location>
        <begin position="320"/>
        <end position="322"/>
    </location>
</feature>
<feature type="helix" evidence="20">
    <location>
        <begin position="324"/>
        <end position="328"/>
    </location>
</feature>
<feature type="turn" evidence="20">
    <location>
        <begin position="329"/>
        <end position="332"/>
    </location>
</feature>
<feature type="strand" evidence="20">
    <location>
        <begin position="338"/>
        <end position="345"/>
    </location>
</feature>
<feature type="helix" evidence="20">
    <location>
        <begin position="349"/>
        <end position="351"/>
    </location>
</feature>
<feature type="helix" evidence="20">
    <location>
        <begin position="352"/>
        <end position="362"/>
    </location>
</feature>
<feature type="strand" evidence="20">
    <location>
        <begin position="364"/>
        <end position="369"/>
    </location>
</feature>
<feature type="turn" evidence="19">
    <location>
        <begin position="577"/>
        <end position="579"/>
    </location>
</feature>
<feature type="helix" evidence="19">
    <location>
        <begin position="582"/>
        <end position="598"/>
    </location>
</feature>
<feature type="helix" evidence="19">
    <location>
        <begin position="601"/>
        <end position="606"/>
    </location>
</feature>
<feature type="helix" evidence="19">
    <location>
        <begin position="612"/>
        <end position="625"/>
    </location>
</feature>
<feature type="helix" evidence="19">
    <location>
        <begin position="631"/>
        <end position="636"/>
    </location>
</feature>
<feature type="helix" evidence="19">
    <location>
        <begin position="642"/>
        <end position="658"/>
    </location>
</feature>
<evidence type="ECO:0000250" key="1">
    <source>
        <dbReference type="UniProtKB" id="Q9I869"/>
    </source>
</evidence>
<evidence type="ECO:0000255" key="2"/>
<evidence type="ECO:0000255" key="3">
    <source>
        <dbReference type="PROSITE-ProRule" id="PRU00283"/>
    </source>
</evidence>
<evidence type="ECO:0000256" key="4">
    <source>
        <dbReference type="SAM" id="MobiDB-lite"/>
    </source>
</evidence>
<evidence type="ECO:0000269" key="5">
    <source>
    </source>
</evidence>
<evidence type="ECO:0000269" key="6">
    <source>
    </source>
</evidence>
<evidence type="ECO:0000269" key="7">
    <source>
    </source>
</evidence>
<evidence type="ECO:0000269" key="8">
    <source>
    </source>
</evidence>
<evidence type="ECO:0000269" key="9">
    <source>
    </source>
</evidence>
<evidence type="ECO:0000269" key="10">
    <source>
    </source>
</evidence>
<evidence type="ECO:0000303" key="11">
    <source>
    </source>
</evidence>
<evidence type="ECO:0000305" key="12"/>
<evidence type="ECO:0007744" key="13">
    <source>
    </source>
</evidence>
<evidence type="ECO:0007744" key="14">
    <source>
    </source>
</evidence>
<evidence type="ECO:0007744" key="15">
    <source>
    </source>
</evidence>
<evidence type="ECO:0007744" key="16">
    <source>
    </source>
</evidence>
<evidence type="ECO:0007744" key="17">
    <source>
    </source>
</evidence>
<evidence type="ECO:0007744" key="18">
    <source>
    </source>
</evidence>
<evidence type="ECO:0007829" key="19">
    <source>
        <dbReference type="PDB" id="2EDU"/>
    </source>
</evidence>
<evidence type="ECO:0007829" key="20">
    <source>
        <dbReference type="PDB" id="6NJE"/>
    </source>
</evidence>
<comment type="function">
    <text evidence="1 9">Kinesin family member that is involved in spindle formation and the movements of chromosomes during mitosis and meiosis. Binds to microtubules and to DNA (By similarity). Plays a role in congression of laterally attached chromosomes in NDC80-depleted cells (PubMed:25743205).</text>
</comment>
<comment type="subunit">
    <text evidence="5 6">Interacts with FAM83D (PubMed:18485706). Interacts with SIAH1 (PubMed:11146551).</text>
</comment>
<comment type="subcellular location">
    <subcellularLocation>
        <location evidence="10">Nucleus</location>
    </subcellularLocation>
    <subcellularLocation>
        <location evidence="12">Cytoplasm</location>
        <location evidence="12">Cytoskeleton</location>
    </subcellularLocation>
</comment>
<comment type="alternative products">
    <event type="alternative splicing"/>
    <isoform>
        <id>Q14807-1</id>
        <name>1</name>
        <sequence type="displayed"/>
    </isoform>
    <isoform>
        <id>Q14807-2</id>
        <name>2</name>
        <sequence type="described" ref="VSP_046428"/>
    </isoform>
</comment>
<comment type="tissue specificity">
    <text evidence="7">Expressed in bone, cartilage, joint capsule, ligament, skin, and primary cultured chondrocytes.</text>
</comment>
<comment type="PTM">
    <text evidence="5">Ubiquitinated; mediated by SIAH1 and leading to its subsequent proteasomal degradation.</text>
</comment>
<comment type="disease" evidence="7 8">
    <disease id="DI-03363">
        <name>Spondyloepimetaphyseal dysplasia with joint laxity, 2</name>
        <acronym>SEMDJL2</acronym>
        <description>A bone disease characterized by short stature, distinctive midface retrusion, progressive knee malalignment (genu valgum and/or varum), generalized ligamentous laxity, and mild spinal deformity. Intellectual development is not impaired. Radiographic characteristics include significantly retarded epiphyseal ossification that evolves into epiphyseal dysplasia and precocious osteoarthritis, metaphyseal irregularities and vertical striations, constricted femoral neck, slender metacarpals and metatarsals, and mild thoracolumbar kyphosis or scoliosis with normal or mild platyspondyly. The most distinctive features for differential diagnosis of SEMDJL2 are the slender metacarpals and phalanges and the progressive degeneration of carpal bones; however, these 2 features are evident only in older children and young adults. The soft consistency of cartilage in the airways leads to laryngotracheomalacia with proneness to respiratory obstruction and inspiratory stridor in infancy and childhood.</description>
        <dbReference type="MIM" id="603546"/>
    </disease>
    <text>The disease is caused by variants affecting the gene represented in this entry.</text>
</comment>
<comment type="similarity">
    <text evidence="3">Belongs to the TRAFAC class myosin-kinesin ATPase superfamily. Kinesin family.</text>
</comment>
<comment type="sequence caution" evidence="12">
    <conflict type="erroneous gene model prediction">
        <sequence resource="EMBL-CDS" id="AAC08709"/>
    </conflict>
</comment>
<comment type="sequence caution" evidence="12">
    <conflict type="erroneous gene model prediction">
        <sequence resource="EMBL-CDS" id="EAW80007"/>
    </conflict>
</comment>
<gene>
    <name type="primary">KIF22</name>
    <name type="synonym">KID</name>
    <name type="synonym">KNSL4</name>
</gene>
<protein>
    <recommendedName>
        <fullName>Kinesin-like protein KIF22</fullName>
    </recommendedName>
    <alternativeName>
        <fullName>Kinesin-like DNA-binding protein</fullName>
    </alternativeName>
    <alternativeName>
        <fullName>Kinesin-like protein 4</fullName>
    </alternativeName>
</protein>
<name>KIF22_HUMAN</name>
<proteinExistence type="evidence at protein level"/>
<keyword id="KW-0002">3D-structure</keyword>
<keyword id="KW-0025">Alternative splicing</keyword>
<keyword id="KW-0067">ATP-binding</keyword>
<keyword id="KW-0175">Coiled coil</keyword>
<keyword id="KW-0963">Cytoplasm</keyword>
<keyword id="KW-0206">Cytoskeleton</keyword>
<keyword id="KW-0225">Disease variant</keyword>
<keyword id="KW-0238">DNA-binding</keyword>
<keyword id="KW-0242">Dwarfism</keyword>
<keyword id="KW-1017">Isopeptide bond</keyword>
<keyword id="KW-0493">Microtubule</keyword>
<keyword id="KW-0505">Motor protein</keyword>
<keyword id="KW-0547">Nucleotide-binding</keyword>
<keyword id="KW-0539">Nucleus</keyword>
<keyword id="KW-0597">Phosphoprotein</keyword>
<keyword id="KW-1267">Proteomics identification</keyword>
<keyword id="KW-1185">Reference proteome</keyword>
<keyword id="KW-0832">Ubl conjugation</keyword>
<accession>Q14807</accession>
<accession>B2R5M0</accession>
<accession>B7Z265</accession>
<accession>O60845</accession>
<accession>O94814</accession>
<accession>Q53F58</accession>
<accession>Q9BT46</accession>
<dbReference type="EMBL" id="AB017430">
    <property type="protein sequence ID" value="BAA33019.2"/>
    <property type="molecule type" value="mRNA"/>
</dbReference>
<dbReference type="EMBL" id="AB017335">
    <property type="protein sequence ID" value="BAA33063.1"/>
    <property type="molecule type" value="Genomic_DNA"/>
</dbReference>
<dbReference type="EMBL" id="BT007259">
    <property type="protein sequence ID" value="AAP35923.1"/>
    <property type="molecule type" value="mRNA"/>
</dbReference>
<dbReference type="EMBL" id="AK294380">
    <property type="protein sequence ID" value="BAH11751.1"/>
    <property type="molecule type" value="mRNA"/>
</dbReference>
<dbReference type="EMBL" id="AK312234">
    <property type="protein sequence ID" value="BAG35167.1"/>
    <property type="molecule type" value="mRNA"/>
</dbReference>
<dbReference type="EMBL" id="AK316389">
    <property type="protein sequence ID" value="BAH14760.1"/>
    <property type="molecule type" value="mRNA"/>
</dbReference>
<dbReference type="EMBL" id="AK223431">
    <property type="protein sequence ID" value="BAD97151.1"/>
    <property type="molecule type" value="mRNA"/>
</dbReference>
<dbReference type="EMBL" id="AC002301">
    <property type="protein sequence ID" value="AAC08709.1"/>
    <property type="status" value="ALT_SEQ"/>
    <property type="molecule type" value="Genomic_DNA"/>
</dbReference>
<dbReference type="EMBL" id="AC009133">
    <property type="status" value="NOT_ANNOTATED_CDS"/>
    <property type="molecule type" value="Genomic_DNA"/>
</dbReference>
<dbReference type="EMBL" id="CH471238">
    <property type="protein sequence ID" value="EAW80005.1"/>
    <property type="molecule type" value="Genomic_DNA"/>
</dbReference>
<dbReference type="EMBL" id="CH471238">
    <property type="protein sequence ID" value="EAW80007.1"/>
    <property type="status" value="ALT_SEQ"/>
    <property type="molecule type" value="Genomic_DNA"/>
</dbReference>
<dbReference type="EMBL" id="BC004352">
    <property type="protein sequence ID" value="AAH04352.1"/>
    <property type="molecule type" value="mRNA"/>
</dbReference>
<dbReference type="EMBL" id="BC028155">
    <property type="protein sequence ID" value="AAH28155.1"/>
    <property type="molecule type" value="mRNA"/>
</dbReference>
<dbReference type="CCDS" id="CCDS10653.1">
    <molecule id="Q14807-1"/>
</dbReference>
<dbReference type="CCDS" id="CCDS58444.1">
    <molecule id="Q14807-2"/>
</dbReference>
<dbReference type="RefSeq" id="NP_001243198.1">
    <molecule id="Q14807-2"/>
    <property type="nucleotide sequence ID" value="NM_001256269.2"/>
</dbReference>
<dbReference type="RefSeq" id="NP_001243199.1">
    <molecule id="Q14807-2"/>
    <property type="nucleotide sequence ID" value="NM_001256270.1"/>
</dbReference>
<dbReference type="RefSeq" id="NP_015556.1">
    <molecule id="Q14807-1"/>
    <property type="nucleotide sequence ID" value="NM_007317.3"/>
</dbReference>
<dbReference type="PDB" id="2EDU">
    <property type="method" value="NMR"/>
    <property type="chains" value="A=570-660"/>
</dbReference>
<dbReference type="PDB" id="6NJE">
    <property type="method" value="X-ray"/>
    <property type="resolution" value="2.20 A"/>
    <property type="chains" value="A=40-400"/>
</dbReference>
<dbReference type="PDBsum" id="2EDU"/>
<dbReference type="PDBsum" id="6NJE"/>
<dbReference type="SMR" id="Q14807"/>
<dbReference type="BioGRID" id="110033">
    <property type="interactions" value="129"/>
</dbReference>
<dbReference type="FunCoup" id="Q14807">
    <property type="interactions" value="1328"/>
</dbReference>
<dbReference type="IntAct" id="Q14807">
    <property type="interactions" value="87"/>
</dbReference>
<dbReference type="MINT" id="Q14807"/>
<dbReference type="STRING" id="9606.ENSP00000160827"/>
<dbReference type="ChEMBL" id="CHEMBL5470"/>
<dbReference type="GlyGen" id="Q14807">
    <property type="glycosylation" value="2 sites, 1 O-linked glycan (1 site)"/>
</dbReference>
<dbReference type="iPTMnet" id="Q14807"/>
<dbReference type="PhosphoSitePlus" id="Q14807"/>
<dbReference type="SwissPalm" id="Q14807"/>
<dbReference type="BioMuta" id="KIF22"/>
<dbReference type="DMDM" id="19863381"/>
<dbReference type="jPOST" id="Q14807"/>
<dbReference type="MassIVE" id="Q14807"/>
<dbReference type="PaxDb" id="9606-ENSP00000160827"/>
<dbReference type="PeptideAtlas" id="Q14807"/>
<dbReference type="ProteomicsDB" id="60189">
    <molecule id="Q14807-1"/>
</dbReference>
<dbReference type="ProteomicsDB" id="6413"/>
<dbReference type="Pumba" id="Q14807"/>
<dbReference type="Antibodypedia" id="13324">
    <property type="antibodies" value="250 antibodies from 31 providers"/>
</dbReference>
<dbReference type="DNASU" id="3835"/>
<dbReference type="Ensembl" id="ENST00000160827.9">
    <molecule id="Q14807-1"/>
    <property type="protein sequence ID" value="ENSP00000160827.5"/>
    <property type="gene ID" value="ENSG00000079616.14"/>
</dbReference>
<dbReference type="Ensembl" id="ENST00000400751.9">
    <molecule id="Q14807-2"/>
    <property type="protein sequence ID" value="ENSP00000383562.5"/>
    <property type="gene ID" value="ENSG00000079616.14"/>
</dbReference>
<dbReference type="Ensembl" id="ENST00000561482.6">
    <molecule id="Q14807-2"/>
    <property type="protein sequence ID" value="ENSP00000454957.1"/>
    <property type="gene ID" value="ENSG00000079616.14"/>
</dbReference>
<dbReference type="Ensembl" id="ENST00000690258.1">
    <molecule id="Q14807-2"/>
    <property type="protein sequence ID" value="ENSP00000509977.1"/>
    <property type="gene ID" value="ENSG00000079616.14"/>
</dbReference>
<dbReference type="GeneID" id="3835"/>
<dbReference type="KEGG" id="hsa:3835"/>
<dbReference type="MANE-Select" id="ENST00000160827.9">
    <property type="protein sequence ID" value="ENSP00000160827.5"/>
    <property type="RefSeq nucleotide sequence ID" value="NM_007317.3"/>
    <property type="RefSeq protein sequence ID" value="NP_015556.1"/>
</dbReference>
<dbReference type="UCSC" id="uc002dts.5">
    <molecule id="Q14807-1"/>
    <property type="organism name" value="human"/>
</dbReference>
<dbReference type="AGR" id="HGNC:6391"/>
<dbReference type="CTD" id="3835"/>
<dbReference type="DisGeNET" id="3835"/>
<dbReference type="GeneCards" id="KIF22"/>
<dbReference type="HGNC" id="HGNC:6391">
    <property type="gene designation" value="KIF22"/>
</dbReference>
<dbReference type="HPA" id="ENSG00000079616">
    <property type="expression patterns" value="Tissue enhanced (lymphoid)"/>
</dbReference>
<dbReference type="MalaCards" id="KIF22"/>
<dbReference type="MIM" id="603213">
    <property type="type" value="gene"/>
</dbReference>
<dbReference type="MIM" id="603546">
    <property type="type" value="phenotype"/>
</dbReference>
<dbReference type="neXtProt" id="NX_Q14807"/>
<dbReference type="OpenTargets" id="ENSG00000079616"/>
<dbReference type="Orphanet" id="93360">
    <property type="disease" value="Spondyloepimetaphyseal dysplasia with joint laxity, leptodactylic type"/>
</dbReference>
<dbReference type="PharmGKB" id="PA30180"/>
<dbReference type="VEuPathDB" id="HostDB:ENSG00000079616"/>
<dbReference type="eggNOG" id="KOG0242">
    <property type="taxonomic scope" value="Eukaryota"/>
</dbReference>
<dbReference type="GeneTree" id="ENSGT00940000159632"/>
<dbReference type="HOGENOM" id="CLU_001485_27_1_1"/>
<dbReference type="InParanoid" id="Q14807"/>
<dbReference type="OMA" id="VIREDRW"/>
<dbReference type="OrthoDB" id="3176171at2759"/>
<dbReference type="PAN-GO" id="Q14807">
    <property type="GO annotations" value="6 GO annotations based on evolutionary models"/>
</dbReference>
<dbReference type="PhylomeDB" id="Q14807"/>
<dbReference type="TreeFam" id="TF105233"/>
<dbReference type="PathwayCommons" id="Q14807"/>
<dbReference type="Reactome" id="R-HSA-2132295">
    <property type="pathway name" value="MHC class II antigen presentation"/>
</dbReference>
<dbReference type="Reactome" id="R-HSA-6811434">
    <property type="pathway name" value="COPI-dependent Golgi-to-ER retrograde traffic"/>
</dbReference>
<dbReference type="Reactome" id="R-HSA-983189">
    <property type="pathway name" value="Kinesins"/>
</dbReference>
<dbReference type="SignaLink" id="Q14807"/>
<dbReference type="SIGNOR" id="Q14807"/>
<dbReference type="BioGRID-ORCS" id="3835">
    <property type="hits" value="103 hits in 1158 CRISPR screens"/>
</dbReference>
<dbReference type="ChiTaRS" id="KIF22">
    <property type="organism name" value="human"/>
</dbReference>
<dbReference type="EvolutionaryTrace" id="Q14807"/>
<dbReference type="GeneWiki" id="KIF22"/>
<dbReference type="GenomeRNAi" id="3835"/>
<dbReference type="Pharos" id="Q14807">
    <property type="development level" value="Tbio"/>
</dbReference>
<dbReference type="PRO" id="PR:Q14807"/>
<dbReference type="Proteomes" id="UP000005640">
    <property type="component" value="Chromosome 16"/>
</dbReference>
<dbReference type="RNAct" id="Q14807">
    <property type="molecule type" value="protein"/>
</dbReference>
<dbReference type="Bgee" id="ENSG00000079616">
    <property type="expression patterns" value="Expressed in ventricular zone and 163 other cell types or tissues"/>
</dbReference>
<dbReference type="ExpressionAtlas" id="Q14807">
    <property type="expression patterns" value="baseline and differential"/>
</dbReference>
<dbReference type="GO" id="GO:0000785">
    <property type="term" value="C:chromatin"/>
    <property type="evidence" value="ECO:0007669"/>
    <property type="project" value="Ensembl"/>
</dbReference>
<dbReference type="GO" id="GO:0005737">
    <property type="term" value="C:cytoplasm"/>
    <property type="evidence" value="ECO:0000318"/>
    <property type="project" value="GO_Central"/>
</dbReference>
<dbReference type="GO" id="GO:0005829">
    <property type="term" value="C:cytosol"/>
    <property type="evidence" value="ECO:0000314"/>
    <property type="project" value="HPA"/>
</dbReference>
<dbReference type="GO" id="GO:0005871">
    <property type="term" value="C:kinesin complex"/>
    <property type="evidence" value="ECO:0000318"/>
    <property type="project" value="GO_Central"/>
</dbReference>
<dbReference type="GO" id="GO:0000776">
    <property type="term" value="C:kinetochore"/>
    <property type="evidence" value="ECO:0000304"/>
    <property type="project" value="ProtInc"/>
</dbReference>
<dbReference type="GO" id="GO:0005874">
    <property type="term" value="C:microtubule"/>
    <property type="evidence" value="ECO:0000318"/>
    <property type="project" value="GO_Central"/>
</dbReference>
<dbReference type="GO" id="GO:0072686">
    <property type="term" value="C:mitotic spindle"/>
    <property type="evidence" value="ECO:0000314"/>
    <property type="project" value="UniProtKB"/>
</dbReference>
<dbReference type="GO" id="GO:0016607">
    <property type="term" value="C:nuclear speck"/>
    <property type="evidence" value="ECO:0000314"/>
    <property type="project" value="HPA"/>
</dbReference>
<dbReference type="GO" id="GO:0005634">
    <property type="term" value="C:nucleus"/>
    <property type="evidence" value="ECO:0000304"/>
    <property type="project" value="ProtInc"/>
</dbReference>
<dbReference type="GO" id="GO:0005524">
    <property type="term" value="F:ATP binding"/>
    <property type="evidence" value="ECO:0007669"/>
    <property type="project" value="UniProtKB-KW"/>
</dbReference>
<dbReference type="GO" id="GO:0016887">
    <property type="term" value="F:ATP hydrolysis activity"/>
    <property type="evidence" value="ECO:0000318"/>
    <property type="project" value="GO_Central"/>
</dbReference>
<dbReference type="GO" id="GO:0003677">
    <property type="term" value="F:DNA binding"/>
    <property type="evidence" value="ECO:0000304"/>
    <property type="project" value="ProtInc"/>
</dbReference>
<dbReference type="GO" id="GO:0008017">
    <property type="term" value="F:microtubule binding"/>
    <property type="evidence" value="ECO:0000318"/>
    <property type="project" value="GO_Central"/>
</dbReference>
<dbReference type="GO" id="GO:0003777">
    <property type="term" value="F:microtubule motor activity"/>
    <property type="evidence" value="ECO:0000318"/>
    <property type="project" value="GO_Central"/>
</dbReference>
<dbReference type="GO" id="GO:0006281">
    <property type="term" value="P:DNA repair"/>
    <property type="evidence" value="ECO:0007669"/>
    <property type="project" value="InterPro"/>
</dbReference>
<dbReference type="GO" id="GO:0051310">
    <property type="term" value="P:metaphase chromosome alignment"/>
    <property type="evidence" value="ECO:0000315"/>
    <property type="project" value="UniProtKB"/>
</dbReference>
<dbReference type="GO" id="GO:0007018">
    <property type="term" value="P:microtubule-based movement"/>
    <property type="evidence" value="ECO:0000318"/>
    <property type="project" value="GO_Central"/>
</dbReference>
<dbReference type="GO" id="GO:0000278">
    <property type="term" value="P:mitotic cell cycle"/>
    <property type="evidence" value="ECO:0000304"/>
    <property type="project" value="ProtInc"/>
</dbReference>
<dbReference type="GO" id="GO:0007080">
    <property type="term" value="P:mitotic metaphase chromosome alignment"/>
    <property type="evidence" value="ECO:0000315"/>
    <property type="project" value="UniProtKB"/>
</dbReference>
<dbReference type="GO" id="GO:0007062">
    <property type="term" value="P:sister chromatid cohesion"/>
    <property type="evidence" value="ECO:0000315"/>
    <property type="project" value="UniProtKB"/>
</dbReference>
<dbReference type="CDD" id="cd01376">
    <property type="entry name" value="KISc_KID_like"/>
    <property type="match status" value="1"/>
</dbReference>
<dbReference type="FunFam" id="1.10.150.280:FF:000002">
    <property type="entry name" value="Kinesin-like protein"/>
    <property type="match status" value="1"/>
</dbReference>
<dbReference type="FunFam" id="3.40.850.10:FF:000043">
    <property type="entry name" value="Kinesin-like protein"/>
    <property type="match status" value="1"/>
</dbReference>
<dbReference type="Gene3D" id="1.10.150.280">
    <property type="entry name" value="AF1531-like domain"/>
    <property type="match status" value="1"/>
</dbReference>
<dbReference type="Gene3D" id="3.40.850.10">
    <property type="entry name" value="Kinesin motor domain"/>
    <property type="match status" value="1"/>
</dbReference>
<dbReference type="InterPro" id="IPR003583">
    <property type="entry name" value="Hlx-hairpin-Hlx_DNA-bd_motif"/>
</dbReference>
<dbReference type="InterPro" id="IPR027640">
    <property type="entry name" value="Kinesin-like_fam"/>
</dbReference>
<dbReference type="InterPro" id="IPR019821">
    <property type="entry name" value="Kinesin_motor_CS"/>
</dbReference>
<dbReference type="InterPro" id="IPR001752">
    <property type="entry name" value="Kinesin_motor_dom"/>
</dbReference>
<dbReference type="InterPro" id="IPR036961">
    <property type="entry name" value="Kinesin_motor_dom_sf"/>
</dbReference>
<dbReference type="InterPro" id="IPR027417">
    <property type="entry name" value="P-loop_NTPase"/>
</dbReference>
<dbReference type="InterPro" id="IPR010994">
    <property type="entry name" value="RuvA_2-like"/>
</dbReference>
<dbReference type="PANTHER" id="PTHR47969">
    <property type="entry name" value="CHROMOSOME-ASSOCIATED KINESIN KIF4A-RELATED"/>
    <property type="match status" value="1"/>
</dbReference>
<dbReference type="PANTHER" id="PTHR47969:SF9">
    <property type="entry name" value="KINESIN-LIKE PROTEIN"/>
    <property type="match status" value="1"/>
</dbReference>
<dbReference type="Pfam" id="PF12836">
    <property type="entry name" value="HHH_3"/>
    <property type="match status" value="1"/>
</dbReference>
<dbReference type="Pfam" id="PF00225">
    <property type="entry name" value="Kinesin"/>
    <property type="match status" value="1"/>
</dbReference>
<dbReference type="PRINTS" id="PR00380">
    <property type="entry name" value="KINESINHEAVY"/>
</dbReference>
<dbReference type="SMART" id="SM00278">
    <property type="entry name" value="HhH1"/>
    <property type="match status" value="2"/>
</dbReference>
<dbReference type="SMART" id="SM00129">
    <property type="entry name" value="KISc"/>
    <property type="match status" value="1"/>
</dbReference>
<dbReference type="SUPFAM" id="SSF52540">
    <property type="entry name" value="P-loop containing nucleoside triphosphate hydrolases"/>
    <property type="match status" value="1"/>
</dbReference>
<dbReference type="SUPFAM" id="SSF47781">
    <property type="entry name" value="RuvA domain 2-like"/>
    <property type="match status" value="1"/>
</dbReference>
<dbReference type="PROSITE" id="PS00411">
    <property type="entry name" value="KINESIN_MOTOR_1"/>
    <property type="match status" value="1"/>
</dbReference>
<dbReference type="PROSITE" id="PS50067">
    <property type="entry name" value="KINESIN_MOTOR_2"/>
    <property type="match status" value="1"/>
</dbReference>